<gene>
    <name evidence="1" type="primary">rpoC</name>
    <name type="ordered locus">Lcho_3866</name>
</gene>
<dbReference type="EC" id="2.7.7.6" evidence="1"/>
<dbReference type="EMBL" id="CP001013">
    <property type="protein sequence ID" value="ACB36120.1"/>
    <property type="molecule type" value="Genomic_DNA"/>
</dbReference>
<dbReference type="RefSeq" id="WP_012348867.1">
    <property type="nucleotide sequence ID" value="NC_010524.1"/>
</dbReference>
<dbReference type="SMR" id="B1Y7H2"/>
<dbReference type="STRING" id="395495.Lcho_3866"/>
<dbReference type="KEGG" id="lch:Lcho_3866"/>
<dbReference type="eggNOG" id="COG0086">
    <property type="taxonomic scope" value="Bacteria"/>
</dbReference>
<dbReference type="HOGENOM" id="CLU_000524_3_1_4"/>
<dbReference type="OrthoDB" id="9815296at2"/>
<dbReference type="Proteomes" id="UP000001693">
    <property type="component" value="Chromosome"/>
</dbReference>
<dbReference type="GO" id="GO:0000428">
    <property type="term" value="C:DNA-directed RNA polymerase complex"/>
    <property type="evidence" value="ECO:0007669"/>
    <property type="project" value="UniProtKB-KW"/>
</dbReference>
<dbReference type="GO" id="GO:0003677">
    <property type="term" value="F:DNA binding"/>
    <property type="evidence" value="ECO:0007669"/>
    <property type="project" value="UniProtKB-UniRule"/>
</dbReference>
<dbReference type="GO" id="GO:0003899">
    <property type="term" value="F:DNA-directed RNA polymerase activity"/>
    <property type="evidence" value="ECO:0007669"/>
    <property type="project" value="UniProtKB-UniRule"/>
</dbReference>
<dbReference type="GO" id="GO:0000287">
    <property type="term" value="F:magnesium ion binding"/>
    <property type="evidence" value="ECO:0007669"/>
    <property type="project" value="UniProtKB-UniRule"/>
</dbReference>
<dbReference type="GO" id="GO:0008270">
    <property type="term" value="F:zinc ion binding"/>
    <property type="evidence" value="ECO:0007669"/>
    <property type="project" value="UniProtKB-UniRule"/>
</dbReference>
<dbReference type="GO" id="GO:0006351">
    <property type="term" value="P:DNA-templated transcription"/>
    <property type="evidence" value="ECO:0007669"/>
    <property type="project" value="UniProtKB-UniRule"/>
</dbReference>
<dbReference type="CDD" id="cd02655">
    <property type="entry name" value="RNAP_beta'_C"/>
    <property type="match status" value="1"/>
</dbReference>
<dbReference type="CDD" id="cd01609">
    <property type="entry name" value="RNAP_beta'_N"/>
    <property type="match status" value="1"/>
</dbReference>
<dbReference type="FunFam" id="1.10.132.30:FF:000003">
    <property type="entry name" value="DNA-directed RNA polymerase subunit beta"/>
    <property type="match status" value="1"/>
</dbReference>
<dbReference type="FunFam" id="1.10.150.390:FF:000002">
    <property type="entry name" value="DNA-directed RNA polymerase subunit beta"/>
    <property type="match status" value="1"/>
</dbReference>
<dbReference type="FunFam" id="4.10.860.120:FF:000001">
    <property type="entry name" value="DNA-directed RNA polymerase subunit beta"/>
    <property type="match status" value="1"/>
</dbReference>
<dbReference type="Gene3D" id="1.10.132.30">
    <property type="match status" value="1"/>
</dbReference>
<dbReference type="Gene3D" id="1.10.150.390">
    <property type="match status" value="1"/>
</dbReference>
<dbReference type="Gene3D" id="1.10.1790.20">
    <property type="match status" value="1"/>
</dbReference>
<dbReference type="Gene3D" id="1.10.40.90">
    <property type="match status" value="1"/>
</dbReference>
<dbReference type="Gene3D" id="2.40.40.20">
    <property type="match status" value="1"/>
</dbReference>
<dbReference type="Gene3D" id="2.40.50.100">
    <property type="match status" value="3"/>
</dbReference>
<dbReference type="Gene3D" id="4.10.860.120">
    <property type="entry name" value="RNA polymerase II, clamp domain"/>
    <property type="match status" value="1"/>
</dbReference>
<dbReference type="Gene3D" id="1.10.274.100">
    <property type="entry name" value="RNA polymerase Rpb1, domain 3"/>
    <property type="match status" value="1"/>
</dbReference>
<dbReference type="HAMAP" id="MF_01322">
    <property type="entry name" value="RNApol_bact_RpoC"/>
    <property type="match status" value="1"/>
</dbReference>
<dbReference type="InterPro" id="IPR045867">
    <property type="entry name" value="DNA-dir_RpoC_beta_prime"/>
</dbReference>
<dbReference type="InterPro" id="IPR012754">
    <property type="entry name" value="DNA-dir_RpoC_beta_prime_bact"/>
</dbReference>
<dbReference type="InterPro" id="IPR000722">
    <property type="entry name" value="RNA_pol_asu"/>
</dbReference>
<dbReference type="InterPro" id="IPR006592">
    <property type="entry name" value="RNA_pol_N"/>
</dbReference>
<dbReference type="InterPro" id="IPR007080">
    <property type="entry name" value="RNA_pol_Rpb1_1"/>
</dbReference>
<dbReference type="InterPro" id="IPR007066">
    <property type="entry name" value="RNA_pol_Rpb1_3"/>
</dbReference>
<dbReference type="InterPro" id="IPR042102">
    <property type="entry name" value="RNA_pol_Rpb1_3_sf"/>
</dbReference>
<dbReference type="InterPro" id="IPR007083">
    <property type="entry name" value="RNA_pol_Rpb1_4"/>
</dbReference>
<dbReference type="InterPro" id="IPR007081">
    <property type="entry name" value="RNA_pol_Rpb1_5"/>
</dbReference>
<dbReference type="InterPro" id="IPR044893">
    <property type="entry name" value="RNA_pol_Rpb1_clamp_domain"/>
</dbReference>
<dbReference type="InterPro" id="IPR038120">
    <property type="entry name" value="Rpb1_funnel_sf"/>
</dbReference>
<dbReference type="NCBIfam" id="TIGR02386">
    <property type="entry name" value="rpoC_TIGR"/>
    <property type="match status" value="1"/>
</dbReference>
<dbReference type="PANTHER" id="PTHR19376">
    <property type="entry name" value="DNA-DIRECTED RNA POLYMERASE"/>
    <property type="match status" value="1"/>
</dbReference>
<dbReference type="PANTHER" id="PTHR19376:SF54">
    <property type="entry name" value="DNA-DIRECTED RNA POLYMERASE SUBUNIT BETA"/>
    <property type="match status" value="1"/>
</dbReference>
<dbReference type="Pfam" id="PF04997">
    <property type="entry name" value="RNA_pol_Rpb1_1"/>
    <property type="match status" value="1"/>
</dbReference>
<dbReference type="Pfam" id="PF00623">
    <property type="entry name" value="RNA_pol_Rpb1_2"/>
    <property type="match status" value="2"/>
</dbReference>
<dbReference type="Pfam" id="PF04983">
    <property type="entry name" value="RNA_pol_Rpb1_3"/>
    <property type="match status" value="1"/>
</dbReference>
<dbReference type="Pfam" id="PF05000">
    <property type="entry name" value="RNA_pol_Rpb1_4"/>
    <property type="match status" value="1"/>
</dbReference>
<dbReference type="Pfam" id="PF04998">
    <property type="entry name" value="RNA_pol_Rpb1_5"/>
    <property type="match status" value="1"/>
</dbReference>
<dbReference type="SMART" id="SM00663">
    <property type="entry name" value="RPOLA_N"/>
    <property type="match status" value="1"/>
</dbReference>
<dbReference type="SUPFAM" id="SSF64484">
    <property type="entry name" value="beta and beta-prime subunits of DNA dependent RNA-polymerase"/>
    <property type="match status" value="1"/>
</dbReference>
<evidence type="ECO:0000255" key="1">
    <source>
        <dbReference type="HAMAP-Rule" id="MF_01322"/>
    </source>
</evidence>
<reference key="1">
    <citation type="submission" date="2008-03" db="EMBL/GenBank/DDBJ databases">
        <title>Complete sequence of Leptothrix cholodnii SP-6.</title>
        <authorList>
            <consortium name="US DOE Joint Genome Institute"/>
            <person name="Copeland A."/>
            <person name="Lucas S."/>
            <person name="Lapidus A."/>
            <person name="Glavina del Rio T."/>
            <person name="Dalin E."/>
            <person name="Tice H."/>
            <person name="Bruce D."/>
            <person name="Goodwin L."/>
            <person name="Pitluck S."/>
            <person name="Chertkov O."/>
            <person name="Brettin T."/>
            <person name="Detter J.C."/>
            <person name="Han C."/>
            <person name="Kuske C.R."/>
            <person name="Schmutz J."/>
            <person name="Larimer F."/>
            <person name="Land M."/>
            <person name="Hauser L."/>
            <person name="Kyrpides N."/>
            <person name="Lykidis A."/>
            <person name="Emerson D."/>
            <person name="Richardson P."/>
        </authorList>
    </citation>
    <scope>NUCLEOTIDE SEQUENCE [LARGE SCALE GENOMIC DNA]</scope>
    <source>
        <strain>ATCC 51168 / LMG 8142 / SP-6</strain>
    </source>
</reference>
<proteinExistence type="inferred from homology"/>
<feature type="chain" id="PRO_1000141779" description="DNA-directed RNA polymerase subunit beta'">
    <location>
        <begin position="1"/>
        <end position="1407"/>
    </location>
</feature>
<feature type="binding site" evidence="1">
    <location>
        <position position="70"/>
    </location>
    <ligand>
        <name>Zn(2+)</name>
        <dbReference type="ChEBI" id="CHEBI:29105"/>
        <label>1</label>
    </ligand>
</feature>
<feature type="binding site" evidence="1">
    <location>
        <position position="72"/>
    </location>
    <ligand>
        <name>Zn(2+)</name>
        <dbReference type="ChEBI" id="CHEBI:29105"/>
        <label>1</label>
    </ligand>
</feature>
<feature type="binding site" evidence="1">
    <location>
        <position position="85"/>
    </location>
    <ligand>
        <name>Zn(2+)</name>
        <dbReference type="ChEBI" id="CHEBI:29105"/>
        <label>1</label>
    </ligand>
</feature>
<feature type="binding site" evidence="1">
    <location>
        <position position="88"/>
    </location>
    <ligand>
        <name>Zn(2+)</name>
        <dbReference type="ChEBI" id="CHEBI:29105"/>
        <label>1</label>
    </ligand>
</feature>
<feature type="binding site" evidence="1">
    <location>
        <position position="458"/>
    </location>
    <ligand>
        <name>Mg(2+)</name>
        <dbReference type="ChEBI" id="CHEBI:18420"/>
    </ligand>
</feature>
<feature type="binding site" evidence="1">
    <location>
        <position position="460"/>
    </location>
    <ligand>
        <name>Mg(2+)</name>
        <dbReference type="ChEBI" id="CHEBI:18420"/>
    </ligand>
</feature>
<feature type="binding site" evidence="1">
    <location>
        <position position="462"/>
    </location>
    <ligand>
        <name>Mg(2+)</name>
        <dbReference type="ChEBI" id="CHEBI:18420"/>
    </ligand>
</feature>
<feature type="binding site" evidence="1">
    <location>
        <position position="814"/>
    </location>
    <ligand>
        <name>Zn(2+)</name>
        <dbReference type="ChEBI" id="CHEBI:29105"/>
        <label>2</label>
    </ligand>
</feature>
<feature type="binding site" evidence="1">
    <location>
        <position position="888"/>
    </location>
    <ligand>
        <name>Zn(2+)</name>
        <dbReference type="ChEBI" id="CHEBI:29105"/>
        <label>2</label>
    </ligand>
</feature>
<feature type="binding site" evidence="1">
    <location>
        <position position="895"/>
    </location>
    <ligand>
        <name>Zn(2+)</name>
        <dbReference type="ChEBI" id="CHEBI:29105"/>
        <label>2</label>
    </ligand>
</feature>
<feature type="binding site" evidence="1">
    <location>
        <position position="898"/>
    </location>
    <ligand>
        <name>Zn(2+)</name>
        <dbReference type="ChEBI" id="CHEBI:29105"/>
        <label>2</label>
    </ligand>
</feature>
<accession>B1Y7H2</accession>
<name>RPOC_LEPCP</name>
<sequence>MKGLLDLFKQFTPDEHFDAIKIGLASPEKIRSWSFGEVKKPETINYRTFKPERDGLFCAKIFGPIKDYECLCGKYKRLKHRGVICEKCGVEVTQTKVRRDRMGHIDLAAPCAHIWFLKSLPSRLGLVLDMTLRDIERVLYFEAYVVTDPGMTPLKKFSIMTEDDYDTKKREFGDEFVALMGAEGIKQLLQEMDLDTEIDKLRNDMTGSELKVKKNSKRLKVMEAFKKSGIKPNWMVMDVLPVLPPDLRPLVPLDGGRFATSDLNDLYRRVINRNNRLARLLELKAPEIIVRNEKRMLQEAVDSLLDNGRRGKAMTGANKRALKSLADMIKGKSGRFRQNLLGKRVDYSGRSVITVGPYLKLHQCGLPKLMALELFKPFIFSRLEAMGIASTIKQAKKEVESGTPVVWDILEEVIKEHPVMLNRAPTLHRLGIQAFEPVLIEGKAIQLHPLVCSAFNADFDGDQMAVHVPLSIEAQMEARTLMLASNNVLFPASGEPSIVPSQDVVLGLYYATRERTNGLGEGMIFSDVVEVQRALDNKVVEITARISVRLTEWLRPEDGSDNFEPHTSLIHTTVGRALLSEILPKGLPFSVMNKALKKKEISRLINTAFRKCGLKATVVFADKLLQSGFRLATRAGISIAIDDMLVPKQKQMLIERAENEVKEIEQQYVSGLVTAGERYNKVVDIWGKTGDEVGKVMMSQLSKQKVIDRNGKEVDQESFNSIYMMADSGARGSAAQIRQLAGMRGLMAKPDGSIIETPITANFREGLNVLQYFISTHGARKGLADTALKTANSGYLTRRLVDVTQDLVVIEDDCGTDNGMAMRALVEGGEVIESLRDRILGRVTAIDVTHPETQEVLVLAGKMLDEDTMEVLEAAGVDEVKVRTSLTCDTRFGICAKCYGRDLGRGGLVNQGEAVGVIAAQSIGEPGTQLTMRTFHIGGAASRAAVASSVDAKSDGIIGFNSTMRYVTNAKGELVVISRSGEIIITDPHGRERERHKVPYGAILNVKPDQTLKAGTILGNWDPLTRPIITEFAGHTRFENVEEGVTVAKQVDEVTGLSTLVVIDPKRRGSAKVVRPQVKLLDVNGQEVKIPGTDHSVTIGFPIGALIQVRDGQDVMPGEVLARIPVEGQKTRDITGGLPRVAELFEARTPKDKGILAEVTGTVSFGKETKGKVRLQITDPEGKVYEELVPKEKNIVVHEGQVVNKGESIIDGPADPQDILRLLGVEELARYIVDEVQDVYRLQGVKINDKHIEVIVRQMLRRVQITNPGDSHYILGEQVERSELFGTNDKLRAQDKLPATYSDVLLGITKASLSTDSFISAASFQETTRVLTEAAIMGKRDELRGLKENVIVGRLIPAGTGMAYHQARKAKDELDDNERRLIAMQEAQEALAAVDADMADSAGNAAE</sequence>
<organism>
    <name type="scientific">Leptothrix cholodnii (strain ATCC 51168 / LMG 8142 / SP-6)</name>
    <name type="common">Leptothrix discophora (strain SP-6)</name>
    <dbReference type="NCBI Taxonomy" id="395495"/>
    <lineage>
        <taxon>Bacteria</taxon>
        <taxon>Pseudomonadati</taxon>
        <taxon>Pseudomonadota</taxon>
        <taxon>Betaproteobacteria</taxon>
        <taxon>Burkholderiales</taxon>
        <taxon>Sphaerotilaceae</taxon>
        <taxon>Leptothrix</taxon>
    </lineage>
</organism>
<keyword id="KW-0240">DNA-directed RNA polymerase</keyword>
<keyword id="KW-0460">Magnesium</keyword>
<keyword id="KW-0479">Metal-binding</keyword>
<keyword id="KW-0548">Nucleotidyltransferase</keyword>
<keyword id="KW-1185">Reference proteome</keyword>
<keyword id="KW-0804">Transcription</keyword>
<keyword id="KW-0808">Transferase</keyword>
<keyword id="KW-0862">Zinc</keyword>
<protein>
    <recommendedName>
        <fullName evidence="1">DNA-directed RNA polymerase subunit beta'</fullName>
        <shortName evidence="1">RNAP subunit beta'</shortName>
        <ecNumber evidence="1">2.7.7.6</ecNumber>
    </recommendedName>
    <alternativeName>
        <fullName evidence="1">RNA polymerase subunit beta'</fullName>
    </alternativeName>
    <alternativeName>
        <fullName evidence="1">Transcriptase subunit beta'</fullName>
    </alternativeName>
</protein>
<comment type="function">
    <text evidence="1">DNA-dependent RNA polymerase catalyzes the transcription of DNA into RNA using the four ribonucleoside triphosphates as substrates.</text>
</comment>
<comment type="catalytic activity">
    <reaction evidence="1">
        <text>RNA(n) + a ribonucleoside 5'-triphosphate = RNA(n+1) + diphosphate</text>
        <dbReference type="Rhea" id="RHEA:21248"/>
        <dbReference type="Rhea" id="RHEA-COMP:14527"/>
        <dbReference type="Rhea" id="RHEA-COMP:17342"/>
        <dbReference type="ChEBI" id="CHEBI:33019"/>
        <dbReference type="ChEBI" id="CHEBI:61557"/>
        <dbReference type="ChEBI" id="CHEBI:140395"/>
        <dbReference type="EC" id="2.7.7.6"/>
    </reaction>
</comment>
<comment type="cofactor">
    <cofactor evidence="1">
        <name>Mg(2+)</name>
        <dbReference type="ChEBI" id="CHEBI:18420"/>
    </cofactor>
    <text evidence="1">Binds 1 Mg(2+) ion per subunit.</text>
</comment>
<comment type="cofactor">
    <cofactor evidence="1">
        <name>Zn(2+)</name>
        <dbReference type="ChEBI" id="CHEBI:29105"/>
    </cofactor>
    <text evidence="1">Binds 2 Zn(2+) ions per subunit.</text>
</comment>
<comment type="subunit">
    <text evidence="1">The RNAP catalytic core consists of 2 alpha, 1 beta, 1 beta' and 1 omega subunit. When a sigma factor is associated with the core the holoenzyme is formed, which can initiate transcription.</text>
</comment>
<comment type="similarity">
    <text evidence="1">Belongs to the RNA polymerase beta' chain family.</text>
</comment>